<gene>
    <name evidence="1" type="primary">atpA</name>
</gene>
<sequence>MSNIRPDEISSILKQQIERYNESVKIENTGTVLQVGDGIARIYGLDNIMAGELLEFEEKTIGIALNLETDNVGAVLMGDGRDILEGSSVKGTGKIAQIGVGDNLLGRVLNALGNPIDGKPNPNSTDYRLIEFNAPGIVSRRSVCEPIQTGITAIDAMIPIGRGQRELIIGDRQTGKTSIALDTIINQKEENVICIYVAIGQKASSVAQAVTLLEEKDALKYTVVIAANANEPATLQYIAPYTGAAIAEHFMYKGLATLIIYDDLTKQAQAYRQMSLLLKRPPGREAYPGDVFYLHSRLLERAAKLNNELGGGSMTALPIIETQAGDVSAYIPTNVISITDGQIFLSSDLFNAGIRPSINVGISVSRVGSAAQIKAMKQVAGKLKLELAQFDELQAFSQFASDLDKSTQAQLARGQRLRELLKQPQASPISVYEQIPMIYAGINGFLDDIKIDRISLFIKKLQECLSNSYPHFYEAIKESKQLSKENEEVLKKAITEVKKNLSFI</sequence>
<geneLocation type="chloroplast"/>
<evidence type="ECO:0000255" key="1">
    <source>
        <dbReference type="HAMAP-Rule" id="MF_01346"/>
    </source>
</evidence>
<proteinExistence type="inferred from homology"/>
<organism>
    <name type="scientific">Cyanidium caldarium</name>
    <name type="common">Red alga</name>
    <dbReference type="NCBI Taxonomy" id="2771"/>
    <lineage>
        <taxon>Eukaryota</taxon>
        <taxon>Rhodophyta</taxon>
        <taxon>Bangiophyceae</taxon>
        <taxon>Cyanidiales</taxon>
        <taxon>Cyanidiaceae</taxon>
        <taxon>Cyanidium</taxon>
    </lineage>
</organism>
<reference key="1">
    <citation type="journal article" date="2000" name="J. Mol. Evol.">
        <title>The structure and gene repertoire of an ancient red algal plastid genome.</title>
        <authorList>
            <person name="Gloeckner G."/>
            <person name="Rosenthal A."/>
            <person name="Valentin K.-U."/>
        </authorList>
    </citation>
    <scope>NUCLEOTIDE SEQUENCE [LARGE SCALE GENOMIC DNA]</scope>
    <source>
        <strain>RK-1</strain>
    </source>
</reference>
<feature type="chain" id="PRO_0000144374" description="ATP synthase subunit alpha, chloroplastic">
    <location>
        <begin position="1"/>
        <end position="504"/>
    </location>
</feature>
<feature type="binding site" evidence="1">
    <location>
        <begin position="170"/>
        <end position="177"/>
    </location>
    <ligand>
        <name>ATP</name>
        <dbReference type="ChEBI" id="CHEBI:30616"/>
    </ligand>
</feature>
<feature type="site" description="Required for activity" evidence="1">
    <location>
        <position position="363"/>
    </location>
</feature>
<accession>Q9TM26</accession>
<keyword id="KW-0066">ATP synthesis</keyword>
<keyword id="KW-0067">ATP-binding</keyword>
<keyword id="KW-0139">CF(1)</keyword>
<keyword id="KW-0150">Chloroplast</keyword>
<keyword id="KW-0375">Hydrogen ion transport</keyword>
<keyword id="KW-0406">Ion transport</keyword>
<keyword id="KW-0472">Membrane</keyword>
<keyword id="KW-0547">Nucleotide-binding</keyword>
<keyword id="KW-0934">Plastid</keyword>
<keyword id="KW-0793">Thylakoid</keyword>
<keyword id="KW-1278">Translocase</keyword>
<keyword id="KW-0813">Transport</keyword>
<comment type="function">
    <text evidence="1">Produces ATP from ADP in the presence of a proton gradient across the membrane. The alpha chain is a regulatory subunit.</text>
</comment>
<comment type="catalytic activity">
    <reaction evidence="1">
        <text>ATP + H2O + 4 H(+)(in) = ADP + phosphate + 5 H(+)(out)</text>
        <dbReference type="Rhea" id="RHEA:57720"/>
        <dbReference type="ChEBI" id="CHEBI:15377"/>
        <dbReference type="ChEBI" id="CHEBI:15378"/>
        <dbReference type="ChEBI" id="CHEBI:30616"/>
        <dbReference type="ChEBI" id="CHEBI:43474"/>
        <dbReference type="ChEBI" id="CHEBI:456216"/>
        <dbReference type="EC" id="7.1.2.2"/>
    </reaction>
</comment>
<comment type="subunit">
    <text evidence="1">F-type ATPases have 2 components, CF(1) - the catalytic core - and CF(0) - the membrane proton channel. CF(1) has five subunits: alpha(3), beta(3), gamma(1), delta(1), epsilon(1). CF(0) has four main subunits: a, b, b' and c.</text>
</comment>
<comment type="subcellular location">
    <subcellularLocation>
        <location evidence="1">Plastid</location>
        <location evidence="1">Chloroplast thylakoid membrane</location>
        <topology evidence="1">Peripheral membrane protein</topology>
    </subcellularLocation>
</comment>
<comment type="similarity">
    <text evidence="1">Belongs to the ATPase alpha/beta chains family.</text>
</comment>
<name>ATPA_CYACA</name>
<protein>
    <recommendedName>
        <fullName evidence="1">ATP synthase subunit alpha, chloroplastic</fullName>
        <ecNumber evidence="1">7.1.2.2</ecNumber>
    </recommendedName>
    <alternativeName>
        <fullName evidence="1">ATP synthase F1 sector subunit alpha</fullName>
    </alternativeName>
    <alternativeName>
        <fullName evidence="1">F-ATPase subunit alpha</fullName>
    </alternativeName>
</protein>
<dbReference type="EC" id="7.1.2.2" evidence="1"/>
<dbReference type="EMBL" id="AF022186">
    <property type="protein sequence ID" value="AAF13005.1"/>
    <property type="molecule type" value="Genomic_DNA"/>
</dbReference>
<dbReference type="RefSeq" id="NP_045041.1">
    <property type="nucleotide sequence ID" value="NC_001840.1"/>
</dbReference>
<dbReference type="SMR" id="Q9TM26"/>
<dbReference type="GeneID" id="800143"/>
<dbReference type="GO" id="GO:0009535">
    <property type="term" value="C:chloroplast thylakoid membrane"/>
    <property type="evidence" value="ECO:0007669"/>
    <property type="project" value="UniProtKB-SubCell"/>
</dbReference>
<dbReference type="GO" id="GO:0045259">
    <property type="term" value="C:proton-transporting ATP synthase complex"/>
    <property type="evidence" value="ECO:0007669"/>
    <property type="project" value="UniProtKB-KW"/>
</dbReference>
<dbReference type="GO" id="GO:0043531">
    <property type="term" value="F:ADP binding"/>
    <property type="evidence" value="ECO:0007669"/>
    <property type="project" value="TreeGrafter"/>
</dbReference>
<dbReference type="GO" id="GO:0005524">
    <property type="term" value="F:ATP binding"/>
    <property type="evidence" value="ECO:0007669"/>
    <property type="project" value="UniProtKB-UniRule"/>
</dbReference>
<dbReference type="GO" id="GO:0046933">
    <property type="term" value="F:proton-transporting ATP synthase activity, rotational mechanism"/>
    <property type="evidence" value="ECO:0007669"/>
    <property type="project" value="UniProtKB-UniRule"/>
</dbReference>
<dbReference type="CDD" id="cd18113">
    <property type="entry name" value="ATP-synt_F1_alpha_C"/>
    <property type="match status" value="1"/>
</dbReference>
<dbReference type="CDD" id="cd18116">
    <property type="entry name" value="ATP-synt_F1_alpha_N"/>
    <property type="match status" value="1"/>
</dbReference>
<dbReference type="CDD" id="cd01132">
    <property type="entry name" value="F1-ATPase_alpha_CD"/>
    <property type="match status" value="1"/>
</dbReference>
<dbReference type="FunFam" id="1.20.150.20:FF:000001">
    <property type="entry name" value="ATP synthase subunit alpha"/>
    <property type="match status" value="1"/>
</dbReference>
<dbReference type="FunFam" id="2.40.30.20:FF:000001">
    <property type="entry name" value="ATP synthase subunit alpha"/>
    <property type="match status" value="1"/>
</dbReference>
<dbReference type="FunFam" id="3.40.50.300:FF:000002">
    <property type="entry name" value="ATP synthase subunit alpha"/>
    <property type="match status" value="1"/>
</dbReference>
<dbReference type="Gene3D" id="2.40.30.20">
    <property type="match status" value="1"/>
</dbReference>
<dbReference type="Gene3D" id="1.20.150.20">
    <property type="entry name" value="ATP synthase alpha/beta chain, C-terminal domain"/>
    <property type="match status" value="1"/>
</dbReference>
<dbReference type="Gene3D" id="3.40.50.300">
    <property type="entry name" value="P-loop containing nucleotide triphosphate hydrolases"/>
    <property type="match status" value="1"/>
</dbReference>
<dbReference type="HAMAP" id="MF_01346">
    <property type="entry name" value="ATP_synth_alpha_bact"/>
    <property type="match status" value="1"/>
</dbReference>
<dbReference type="InterPro" id="IPR023366">
    <property type="entry name" value="ATP_synth_asu-like_sf"/>
</dbReference>
<dbReference type="InterPro" id="IPR000793">
    <property type="entry name" value="ATP_synth_asu_C"/>
</dbReference>
<dbReference type="InterPro" id="IPR038376">
    <property type="entry name" value="ATP_synth_asu_C_sf"/>
</dbReference>
<dbReference type="InterPro" id="IPR033732">
    <property type="entry name" value="ATP_synth_F1_a_nt-bd_dom"/>
</dbReference>
<dbReference type="InterPro" id="IPR005294">
    <property type="entry name" value="ATP_synth_F1_asu"/>
</dbReference>
<dbReference type="InterPro" id="IPR020003">
    <property type="entry name" value="ATPase_a/bsu_AS"/>
</dbReference>
<dbReference type="InterPro" id="IPR004100">
    <property type="entry name" value="ATPase_F1/V1/A1_a/bsu_N"/>
</dbReference>
<dbReference type="InterPro" id="IPR036121">
    <property type="entry name" value="ATPase_F1/V1/A1_a/bsu_N_sf"/>
</dbReference>
<dbReference type="InterPro" id="IPR000194">
    <property type="entry name" value="ATPase_F1/V1/A1_a/bsu_nucl-bd"/>
</dbReference>
<dbReference type="InterPro" id="IPR027417">
    <property type="entry name" value="P-loop_NTPase"/>
</dbReference>
<dbReference type="NCBIfam" id="TIGR00962">
    <property type="entry name" value="atpA"/>
    <property type="match status" value="1"/>
</dbReference>
<dbReference type="NCBIfam" id="NF009884">
    <property type="entry name" value="PRK13343.1"/>
    <property type="match status" value="1"/>
</dbReference>
<dbReference type="PANTHER" id="PTHR48082">
    <property type="entry name" value="ATP SYNTHASE SUBUNIT ALPHA, MITOCHONDRIAL"/>
    <property type="match status" value="1"/>
</dbReference>
<dbReference type="PANTHER" id="PTHR48082:SF2">
    <property type="entry name" value="ATP SYNTHASE SUBUNIT ALPHA, MITOCHONDRIAL"/>
    <property type="match status" value="1"/>
</dbReference>
<dbReference type="Pfam" id="PF00006">
    <property type="entry name" value="ATP-synt_ab"/>
    <property type="match status" value="1"/>
</dbReference>
<dbReference type="Pfam" id="PF00306">
    <property type="entry name" value="ATP-synt_ab_C"/>
    <property type="match status" value="1"/>
</dbReference>
<dbReference type="Pfam" id="PF02874">
    <property type="entry name" value="ATP-synt_ab_N"/>
    <property type="match status" value="1"/>
</dbReference>
<dbReference type="PIRSF" id="PIRSF039088">
    <property type="entry name" value="F_ATPase_subunit_alpha"/>
    <property type="match status" value="1"/>
</dbReference>
<dbReference type="SUPFAM" id="SSF47917">
    <property type="entry name" value="C-terminal domain of alpha and beta subunits of F1 ATP synthase"/>
    <property type="match status" value="1"/>
</dbReference>
<dbReference type="SUPFAM" id="SSF50615">
    <property type="entry name" value="N-terminal domain of alpha and beta subunits of F1 ATP synthase"/>
    <property type="match status" value="1"/>
</dbReference>
<dbReference type="SUPFAM" id="SSF52540">
    <property type="entry name" value="P-loop containing nucleoside triphosphate hydrolases"/>
    <property type="match status" value="1"/>
</dbReference>
<dbReference type="PROSITE" id="PS00152">
    <property type="entry name" value="ATPASE_ALPHA_BETA"/>
    <property type="match status" value="1"/>
</dbReference>